<feature type="chain" id="PRO_0000154270" description="Indole-3-glycerol phosphate synthase">
    <location>
        <begin position="1"/>
        <end position="264"/>
    </location>
</feature>
<evidence type="ECO:0000255" key="1">
    <source>
        <dbReference type="HAMAP-Rule" id="MF_00134"/>
    </source>
</evidence>
<dbReference type="EC" id="4.1.1.48" evidence="1"/>
<dbReference type="EMBL" id="AE009442">
    <property type="protein sequence ID" value="AAO28067.1"/>
    <property type="molecule type" value="Genomic_DNA"/>
</dbReference>
<dbReference type="RefSeq" id="WP_004572975.1">
    <property type="nucleotide sequence ID" value="NC_004556.1"/>
</dbReference>
<dbReference type="SMR" id="Q87EX2"/>
<dbReference type="GeneID" id="93903863"/>
<dbReference type="KEGG" id="xft:PD_0173"/>
<dbReference type="HOGENOM" id="CLU_034247_2_0_6"/>
<dbReference type="UniPathway" id="UPA00035">
    <property type="reaction ID" value="UER00043"/>
</dbReference>
<dbReference type="Proteomes" id="UP000002516">
    <property type="component" value="Chromosome"/>
</dbReference>
<dbReference type="GO" id="GO:0004425">
    <property type="term" value="F:indole-3-glycerol-phosphate synthase activity"/>
    <property type="evidence" value="ECO:0007669"/>
    <property type="project" value="UniProtKB-UniRule"/>
</dbReference>
<dbReference type="GO" id="GO:0004640">
    <property type="term" value="F:phosphoribosylanthranilate isomerase activity"/>
    <property type="evidence" value="ECO:0007669"/>
    <property type="project" value="TreeGrafter"/>
</dbReference>
<dbReference type="GO" id="GO:0000162">
    <property type="term" value="P:L-tryptophan biosynthetic process"/>
    <property type="evidence" value="ECO:0007669"/>
    <property type="project" value="UniProtKB-UniRule"/>
</dbReference>
<dbReference type="CDD" id="cd00331">
    <property type="entry name" value="IGPS"/>
    <property type="match status" value="1"/>
</dbReference>
<dbReference type="FunFam" id="3.20.20.70:FF:000024">
    <property type="entry name" value="Indole-3-glycerol phosphate synthase"/>
    <property type="match status" value="1"/>
</dbReference>
<dbReference type="Gene3D" id="3.20.20.70">
    <property type="entry name" value="Aldolase class I"/>
    <property type="match status" value="1"/>
</dbReference>
<dbReference type="HAMAP" id="MF_00134_B">
    <property type="entry name" value="IGPS_B"/>
    <property type="match status" value="1"/>
</dbReference>
<dbReference type="InterPro" id="IPR013785">
    <property type="entry name" value="Aldolase_TIM"/>
</dbReference>
<dbReference type="InterPro" id="IPR045186">
    <property type="entry name" value="Indole-3-glycerol_P_synth"/>
</dbReference>
<dbReference type="InterPro" id="IPR013798">
    <property type="entry name" value="Indole-3-glycerol_P_synth_dom"/>
</dbReference>
<dbReference type="InterPro" id="IPR001468">
    <property type="entry name" value="Indole-3-GlycerolPSynthase_CS"/>
</dbReference>
<dbReference type="InterPro" id="IPR011060">
    <property type="entry name" value="RibuloseP-bd_barrel"/>
</dbReference>
<dbReference type="NCBIfam" id="NF001370">
    <property type="entry name" value="PRK00278.1-2"/>
    <property type="match status" value="1"/>
</dbReference>
<dbReference type="NCBIfam" id="NF001373">
    <property type="entry name" value="PRK00278.1-6"/>
    <property type="match status" value="1"/>
</dbReference>
<dbReference type="NCBIfam" id="NF001377">
    <property type="entry name" value="PRK00278.2-4"/>
    <property type="match status" value="1"/>
</dbReference>
<dbReference type="PANTHER" id="PTHR22854:SF2">
    <property type="entry name" value="INDOLE-3-GLYCEROL-PHOSPHATE SYNTHASE"/>
    <property type="match status" value="1"/>
</dbReference>
<dbReference type="PANTHER" id="PTHR22854">
    <property type="entry name" value="TRYPTOPHAN BIOSYNTHESIS PROTEIN"/>
    <property type="match status" value="1"/>
</dbReference>
<dbReference type="Pfam" id="PF00218">
    <property type="entry name" value="IGPS"/>
    <property type="match status" value="1"/>
</dbReference>
<dbReference type="SUPFAM" id="SSF51366">
    <property type="entry name" value="Ribulose-phoshate binding barrel"/>
    <property type="match status" value="1"/>
</dbReference>
<dbReference type="PROSITE" id="PS00614">
    <property type="entry name" value="IGPS"/>
    <property type="match status" value="1"/>
</dbReference>
<organism>
    <name type="scientific">Xylella fastidiosa (strain Temecula1 / ATCC 700964)</name>
    <dbReference type="NCBI Taxonomy" id="183190"/>
    <lineage>
        <taxon>Bacteria</taxon>
        <taxon>Pseudomonadati</taxon>
        <taxon>Pseudomonadota</taxon>
        <taxon>Gammaproteobacteria</taxon>
        <taxon>Lysobacterales</taxon>
        <taxon>Lysobacteraceae</taxon>
        <taxon>Xylella</taxon>
    </lineage>
</organism>
<name>TRPC_XYLFT</name>
<protein>
    <recommendedName>
        <fullName evidence="1">Indole-3-glycerol phosphate synthase</fullName>
        <shortName evidence="1">IGPS</shortName>
        <ecNumber evidence="1">4.1.1.48</ecNumber>
    </recommendedName>
</protein>
<keyword id="KW-0028">Amino-acid biosynthesis</keyword>
<keyword id="KW-0057">Aromatic amino acid biosynthesis</keyword>
<keyword id="KW-0210">Decarboxylase</keyword>
<keyword id="KW-0456">Lyase</keyword>
<keyword id="KW-1185">Reference proteome</keyword>
<keyword id="KW-0822">Tryptophan biosynthesis</keyword>
<comment type="catalytic activity">
    <reaction evidence="1">
        <text>1-(2-carboxyphenylamino)-1-deoxy-D-ribulose 5-phosphate + H(+) = (1S,2R)-1-C-(indol-3-yl)glycerol 3-phosphate + CO2 + H2O</text>
        <dbReference type="Rhea" id="RHEA:23476"/>
        <dbReference type="ChEBI" id="CHEBI:15377"/>
        <dbReference type="ChEBI" id="CHEBI:15378"/>
        <dbReference type="ChEBI" id="CHEBI:16526"/>
        <dbReference type="ChEBI" id="CHEBI:58613"/>
        <dbReference type="ChEBI" id="CHEBI:58866"/>
        <dbReference type="EC" id="4.1.1.48"/>
    </reaction>
</comment>
<comment type="pathway">
    <text evidence="1">Amino-acid biosynthesis; L-tryptophan biosynthesis; L-tryptophan from chorismate: step 4/5.</text>
</comment>
<comment type="similarity">
    <text evidence="1">Belongs to the TrpC family.</text>
</comment>
<gene>
    <name evidence="1" type="primary">trpC</name>
    <name type="ordered locus">PD_0173</name>
</gene>
<proteinExistence type="inferred from homology"/>
<reference key="1">
    <citation type="journal article" date="2003" name="J. Bacteriol.">
        <title>Comparative analyses of the complete genome sequences of Pierce's disease and citrus variegated chlorosis strains of Xylella fastidiosa.</title>
        <authorList>
            <person name="Van Sluys M.A."/>
            <person name="de Oliveira M.C."/>
            <person name="Monteiro-Vitorello C.B."/>
            <person name="Miyaki C.Y."/>
            <person name="Furlan L.R."/>
            <person name="Camargo L.E.A."/>
            <person name="da Silva A.C.R."/>
            <person name="Moon D.H."/>
            <person name="Takita M.A."/>
            <person name="Lemos E.G.M."/>
            <person name="Machado M.A."/>
            <person name="Ferro M.I.T."/>
            <person name="da Silva F.R."/>
            <person name="Goldman M.H.S."/>
            <person name="Goldman G.H."/>
            <person name="Lemos M.V.F."/>
            <person name="El-Dorry H."/>
            <person name="Tsai S.M."/>
            <person name="Carrer H."/>
            <person name="Carraro D.M."/>
            <person name="de Oliveira R.C."/>
            <person name="Nunes L.R."/>
            <person name="Siqueira W.J."/>
            <person name="Coutinho L.L."/>
            <person name="Kimura E.T."/>
            <person name="Ferro E.S."/>
            <person name="Harakava R."/>
            <person name="Kuramae E.E."/>
            <person name="Marino C.L."/>
            <person name="Giglioti E."/>
            <person name="Abreu I.L."/>
            <person name="Alves L.M.C."/>
            <person name="do Amaral A.M."/>
            <person name="Baia G.S."/>
            <person name="Blanco S.R."/>
            <person name="Brito M.S."/>
            <person name="Cannavan F.S."/>
            <person name="Celestino A.V."/>
            <person name="da Cunha A.F."/>
            <person name="Fenille R.C."/>
            <person name="Ferro J.A."/>
            <person name="Formighieri E.F."/>
            <person name="Kishi L.T."/>
            <person name="Leoni S.G."/>
            <person name="Oliveira A.R."/>
            <person name="Rosa V.E. Jr."/>
            <person name="Sassaki F.T."/>
            <person name="Sena J.A.D."/>
            <person name="de Souza A.A."/>
            <person name="Truffi D."/>
            <person name="Tsukumo F."/>
            <person name="Yanai G.M."/>
            <person name="Zaros L.G."/>
            <person name="Civerolo E.L."/>
            <person name="Simpson A.J.G."/>
            <person name="Almeida N.F. Jr."/>
            <person name="Setubal J.C."/>
            <person name="Kitajima J.P."/>
        </authorList>
    </citation>
    <scope>NUCLEOTIDE SEQUENCE [LARGE SCALE GENOMIC DNA]</scope>
    <source>
        <strain>Temecula1 / ATCC 700964</strain>
    </source>
</reference>
<accession>Q87EX2</accession>
<sequence>MSNILTKILARKVEEIAERLLHVSQAELVARCADLPTPRGFAAALQATIAHGDPAVIAEIKKASPSKGVLREDFRPAEIAISYELGGASCLSVLTDVHFFKGHDDYLSQARDACTLPVLRKDFTIDPYQVYEARVLGADCILLIVAALDDAQLVDLSGLALQLGMDVLVEVHDIDELERAIQISAPLIGINNRNLSTFNVSLETTLTMKGLVPRDRLLVSESGILTSADVQRLRAAGVNAFLVGEAFMRAAEPGESLREMFFIT</sequence>